<accession>Q21B49</accession>
<proteinExistence type="inferred from homology"/>
<organism>
    <name type="scientific">Rhodopseudomonas palustris (strain BisB18)</name>
    <dbReference type="NCBI Taxonomy" id="316056"/>
    <lineage>
        <taxon>Bacteria</taxon>
        <taxon>Pseudomonadati</taxon>
        <taxon>Pseudomonadota</taxon>
        <taxon>Alphaproteobacteria</taxon>
        <taxon>Hyphomicrobiales</taxon>
        <taxon>Nitrobacteraceae</taxon>
        <taxon>Rhodopseudomonas</taxon>
    </lineage>
</organism>
<reference key="1">
    <citation type="submission" date="2006-03" db="EMBL/GenBank/DDBJ databases">
        <title>Complete sequence of Rhodopseudomonas palustris BisB18.</title>
        <authorList>
            <consortium name="US DOE Joint Genome Institute"/>
            <person name="Copeland A."/>
            <person name="Lucas S."/>
            <person name="Lapidus A."/>
            <person name="Barry K."/>
            <person name="Detter J.C."/>
            <person name="Glavina del Rio T."/>
            <person name="Hammon N."/>
            <person name="Israni S."/>
            <person name="Dalin E."/>
            <person name="Tice H."/>
            <person name="Pitluck S."/>
            <person name="Chain P."/>
            <person name="Malfatti S."/>
            <person name="Shin M."/>
            <person name="Vergez L."/>
            <person name="Schmutz J."/>
            <person name="Larimer F."/>
            <person name="Land M."/>
            <person name="Hauser L."/>
            <person name="Pelletier D.A."/>
            <person name="Kyrpides N."/>
            <person name="Anderson I."/>
            <person name="Oda Y."/>
            <person name="Harwood C.S."/>
            <person name="Richardson P."/>
        </authorList>
    </citation>
    <scope>NUCLEOTIDE SEQUENCE [LARGE SCALE GENOMIC DNA]</scope>
    <source>
        <strain>BisB18</strain>
    </source>
</reference>
<gene>
    <name evidence="1" type="primary">engB</name>
    <name type="ordered locus">RPC_0816</name>
</gene>
<comment type="function">
    <text evidence="1">Necessary for normal cell division and for the maintenance of normal septation.</text>
</comment>
<comment type="cofactor">
    <cofactor evidence="1">
        <name>Mg(2+)</name>
        <dbReference type="ChEBI" id="CHEBI:18420"/>
    </cofactor>
</comment>
<comment type="similarity">
    <text evidence="1">Belongs to the TRAFAC class TrmE-Era-EngA-EngB-Septin-like GTPase superfamily. EngB GTPase family.</text>
</comment>
<name>ENGB_RHOPB</name>
<evidence type="ECO:0000255" key="1">
    <source>
        <dbReference type="HAMAP-Rule" id="MF_00321"/>
    </source>
</evidence>
<keyword id="KW-0131">Cell cycle</keyword>
<keyword id="KW-0132">Cell division</keyword>
<keyword id="KW-0342">GTP-binding</keyword>
<keyword id="KW-0460">Magnesium</keyword>
<keyword id="KW-0479">Metal-binding</keyword>
<keyword id="KW-0547">Nucleotide-binding</keyword>
<keyword id="KW-0717">Septation</keyword>
<sequence>MTQDNDAKFIEQGRKLFAGDWQFIWASPSIETLPPMAGLEVAFAGRSNVGKSSLINALTGRNALARTSHTPGRTQELIFFEGPENANFRLVDMPGYGYASAPKAKIASWTSLIHNFLQGRSTLARVYVLIDARHGLKEVDQDVLNTLDKSAVSYQVVLTKADQVKPAELAQCRIDVEAGLRKHPAAYPELLVTSSRTGAGMPELRAAMIKLIAERS</sequence>
<protein>
    <recommendedName>
        <fullName evidence="1">Probable GTP-binding protein EngB</fullName>
    </recommendedName>
</protein>
<feature type="chain" id="PRO_0000266931" description="Probable GTP-binding protein EngB">
    <location>
        <begin position="1"/>
        <end position="216"/>
    </location>
</feature>
<feature type="domain" description="EngB-type G" evidence="1">
    <location>
        <begin position="37"/>
        <end position="214"/>
    </location>
</feature>
<feature type="binding site" evidence="1">
    <location>
        <begin position="45"/>
        <end position="52"/>
    </location>
    <ligand>
        <name>GTP</name>
        <dbReference type="ChEBI" id="CHEBI:37565"/>
    </ligand>
</feature>
<feature type="binding site" evidence="1">
    <location>
        <position position="52"/>
    </location>
    <ligand>
        <name>Mg(2+)</name>
        <dbReference type="ChEBI" id="CHEBI:18420"/>
    </ligand>
</feature>
<feature type="binding site" evidence="1">
    <location>
        <begin position="72"/>
        <end position="76"/>
    </location>
    <ligand>
        <name>GTP</name>
        <dbReference type="ChEBI" id="CHEBI:37565"/>
    </ligand>
</feature>
<feature type="binding site" evidence="1">
    <location>
        <position position="74"/>
    </location>
    <ligand>
        <name>Mg(2+)</name>
        <dbReference type="ChEBI" id="CHEBI:18420"/>
    </ligand>
</feature>
<feature type="binding site" evidence="1">
    <location>
        <begin position="92"/>
        <end position="95"/>
    </location>
    <ligand>
        <name>GTP</name>
        <dbReference type="ChEBI" id="CHEBI:37565"/>
    </ligand>
</feature>
<feature type="binding site" evidence="1">
    <location>
        <begin position="159"/>
        <end position="162"/>
    </location>
    <ligand>
        <name>GTP</name>
        <dbReference type="ChEBI" id="CHEBI:37565"/>
    </ligand>
</feature>
<feature type="binding site" evidence="1">
    <location>
        <begin position="193"/>
        <end position="195"/>
    </location>
    <ligand>
        <name>GTP</name>
        <dbReference type="ChEBI" id="CHEBI:37565"/>
    </ligand>
</feature>
<dbReference type="EMBL" id="CP000301">
    <property type="protein sequence ID" value="ABD86387.1"/>
    <property type="molecule type" value="Genomic_DNA"/>
</dbReference>
<dbReference type="SMR" id="Q21B49"/>
<dbReference type="STRING" id="316056.RPC_0816"/>
<dbReference type="KEGG" id="rpc:RPC_0816"/>
<dbReference type="eggNOG" id="COG0218">
    <property type="taxonomic scope" value="Bacteria"/>
</dbReference>
<dbReference type="HOGENOM" id="CLU_033732_2_0_5"/>
<dbReference type="OrthoDB" id="9804921at2"/>
<dbReference type="GO" id="GO:0005829">
    <property type="term" value="C:cytosol"/>
    <property type="evidence" value="ECO:0007669"/>
    <property type="project" value="TreeGrafter"/>
</dbReference>
<dbReference type="GO" id="GO:0005525">
    <property type="term" value="F:GTP binding"/>
    <property type="evidence" value="ECO:0007669"/>
    <property type="project" value="UniProtKB-UniRule"/>
</dbReference>
<dbReference type="GO" id="GO:0046872">
    <property type="term" value="F:metal ion binding"/>
    <property type="evidence" value="ECO:0007669"/>
    <property type="project" value="UniProtKB-KW"/>
</dbReference>
<dbReference type="GO" id="GO:0000917">
    <property type="term" value="P:division septum assembly"/>
    <property type="evidence" value="ECO:0007669"/>
    <property type="project" value="UniProtKB-KW"/>
</dbReference>
<dbReference type="CDD" id="cd01876">
    <property type="entry name" value="YihA_EngB"/>
    <property type="match status" value="1"/>
</dbReference>
<dbReference type="Gene3D" id="3.40.50.300">
    <property type="entry name" value="P-loop containing nucleotide triphosphate hydrolases"/>
    <property type="match status" value="1"/>
</dbReference>
<dbReference type="HAMAP" id="MF_00321">
    <property type="entry name" value="GTPase_EngB"/>
    <property type="match status" value="1"/>
</dbReference>
<dbReference type="InterPro" id="IPR030393">
    <property type="entry name" value="G_ENGB_dom"/>
</dbReference>
<dbReference type="InterPro" id="IPR006073">
    <property type="entry name" value="GTP-bd"/>
</dbReference>
<dbReference type="InterPro" id="IPR019987">
    <property type="entry name" value="GTP-bd_ribosome_bio_YsxC"/>
</dbReference>
<dbReference type="InterPro" id="IPR027417">
    <property type="entry name" value="P-loop_NTPase"/>
</dbReference>
<dbReference type="NCBIfam" id="TIGR03598">
    <property type="entry name" value="GTPase_YsxC"/>
    <property type="match status" value="1"/>
</dbReference>
<dbReference type="PANTHER" id="PTHR11649:SF13">
    <property type="entry name" value="ENGB-TYPE G DOMAIN-CONTAINING PROTEIN"/>
    <property type="match status" value="1"/>
</dbReference>
<dbReference type="PANTHER" id="PTHR11649">
    <property type="entry name" value="MSS1/TRME-RELATED GTP-BINDING PROTEIN"/>
    <property type="match status" value="1"/>
</dbReference>
<dbReference type="Pfam" id="PF01926">
    <property type="entry name" value="MMR_HSR1"/>
    <property type="match status" value="1"/>
</dbReference>
<dbReference type="SUPFAM" id="SSF52540">
    <property type="entry name" value="P-loop containing nucleoside triphosphate hydrolases"/>
    <property type="match status" value="1"/>
</dbReference>
<dbReference type="PROSITE" id="PS51706">
    <property type="entry name" value="G_ENGB"/>
    <property type="match status" value="1"/>
</dbReference>